<protein>
    <recommendedName>
        <fullName evidence="1">RNA-binding protein Hfq</fullName>
    </recommendedName>
</protein>
<feature type="chain" id="PRO_1000080654" description="RNA-binding protein Hfq">
    <location>
        <begin position="1"/>
        <end position="82"/>
    </location>
</feature>
<feature type="domain" description="Sm" evidence="2">
    <location>
        <begin position="11"/>
        <end position="71"/>
    </location>
</feature>
<gene>
    <name evidence="1" type="primary">hfq</name>
    <name type="ordered locus">bsr4491</name>
</gene>
<accession>Q89LQ2</accession>
<comment type="function">
    <text evidence="1">RNA chaperone that binds small regulatory RNA (sRNAs) and mRNAs to facilitate mRNA translational regulation in response to envelope stress, environmental stress and changes in metabolite concentrations. Also binds with high specificity to tRNAs.</text>
</comment>
<comment type="subunit">
    <text evidence="1">Homohexamer.</text>
</comment>
<comment type="similarity">
    <text evidence="1">Belongs to the Hfq family.</text>
</comment>
<proteinExistence type="inferred from homology"/>
<sequence>MAADRAQNLQDTFLNHVRKTKTPLTIFLVNGVKLQGIVTWFDNFCLLLRRDGHSQLVYKHAISTIMPGAPIQLFEGGEDQPA</sequence>
<dbReference type="EMBL" id="BA000040">
    <property type="protein sequence ID" value="BAC49756.1"/>
    <property type="molecule type" value="Genomic_DNA"/>
</dbReference>
<dbReference type="RefSeq" id="NP_771131.1">
    <property type="nucleotide sequence ID" value="NC_004463.1"/>
</dbReference>
<dbReference type="RefSeq" id="WP_007591126.1">
    <property type="nucleotide sequence ID" value="NZ_CP011360.1"/>
</dbReference>
<dbReference type="SMR" id="Q89LQ2"/>
<dbReference type="FunCoup" id="Q89LQ2">
    <property type="interactions" value="341"/>
</dbReference>
<dbReference type="STRING" id="224911.AAV28_19630"/>
<dbReference type="EnsemblBacteria" id="BAC49756">
    <property type="protein sequence ID" value="BAC49756"/>
    <property type="gene ID" value="BAC49756"/>
</dbReference>
<dbReference type="GeneID" id="93177338"/>
<dbReference type="KEGG" id="bja:bsr4491"/>
<dbReference type="PATRIC" id="fig|224911.44.peg.4267"/>
<dbReference type="eggNOG" id="COG1923">
    <property type="taxonomic scope" value="Bacteria"/>
</dbReference>
<dbReference type="HOGENOM" id="CLU_113688_0_0_5"/>
<dbReference type="InParanoid" id="Q89LQ2"/>
<dbReference type="OrthoDB" id="9799751at2"/>
<dbReference type="PhylomeDB" id="Q89LQ2"/>
<dbReference type="PRO" id="PR:Q89LQ2"/>
<dbReference type="Proteomes" id="UP000002526">
    <property type="component" value="Chromosome"/>
</dbReference>
<dbReference type="GO" id="GO:0005829">
    <property type="term" value="C:cytosol"/>
    <property type="evidence" value="ECO:0000318"/>
    <property type="project" value="GO_Central"/>
</dbReference>
<dbReference type="GO" id="GO:0003723">
    <property type="term" value="F:RNA binding"/>
    <property type="evidence" value="ECO:0000318"/>
    <property type="project" value="GO_Central"/>
</dbReference>
<dbReference type="GO" id="GO:0006355">
    <property type="term" value="P:regulation of DNA-templated transcription"/>
    <property type="evidence" value="ECO:0007669"/>
    <property type="project" value="InterPro"/>
</dbReference>
<dbReference type="GO" id="GO:0043487">
    <property type="term" value="P:regulation of RNA stability"/>
    <property type="evidence" value="ECO:0000318"/>
    <property type="project" value="GO_Central"/>
</dbReference>
<dbReference type="GO" id="GO:0045974">
    <property type="term" value="P:regulation of translation, ncRNA-mediated"/>
    <property type="evidence" value="ECO:0000318"/>
    <property type="project" value="GO_Central"/>
</dbReference>
<dbReference type="CDD" id="cd01716">
    <property type="entry name" value="Hfq"/>
    <property type="match status" value="1"/>
</dbReference>
<dbReference type="FunFam" id="2.30.30.100:FF:000001">
    <property type="entry name" value="RNA-binding protein Hfq"/>
    <property type="match status" value="1"/>
</dbReference>
<dbReference type="Gene3D" id="2.30.30.100">
    <property type="match status" value="1"/>
</dbReference>
<dbReference type="HAMAP" id="MF_00436">
    <property type="entry name" value="Hfq"/>
    <property type="match status" value="1"/>
</dbReference>
<dbReference type="InterPro" id="IPR005001">
    <property type="entry name" value="Hfq"/>
</dbReference>
<dbReference type="InterPro" id="IPR010920">
    <property type="entry name" value="LSM_dom_sf"/>
</dbReference>
<dbReference type="InterPro" id="IPR047575">
    <property type="entry name" value="Sm"/>
</dbReference>
<dbReference type="NCBIfam" id="TIGR02383">
    <property type="entry name" value="Hfq"/>
    <property type="match status" value="1"/>
</dbReference>
<dbReference type="NCBIfam" id="NF001602">
    <property type="entry name" value="PRK00395.1"/>
    <property type="match status" value="1"/>
</dbReference>
<dbReference type="PANTHER" id="PTHR34772">
    <property type="entry name" value="RNA-BINDING PROTEIN HFQ"/>
    <property type="match status" value="1"/>
</dbReference>
<dbReference type="PANTHER" id="PTHR34772:SF1">
    <property type="entry name" value="RNA-BINDING PROTEIN HFQ"/>
    <property type="match status" value="1"/>
</dbReference>
<dbReference type="Pfam" id="PF17209">
    <property type="entry name" value="Hfq"/>
    <property type="match status" value="1"/>
</dbReference>
<dbReference type="SUPFAM" id="SSF50182">
    <property type="entry name" value="Sm-like ribonucleoproteins"/>
    <property type="match status" value="1"/>
</dbReference>
<dbReference type="PROSITE" id="PS52002">
    <property type="entry name" value="SM"/>
    <property type="match status" value="1"/>
</dbReference>
<evidence type="ECO:0000255" key="1">
    <source>
        <dbReference type="HAMAP-Rule" id="MF_00436"/>
    </source>
</evidence>
<evidence type="ECO:0000255" key="2">
    <source>
        <dbReference type="PROSITE-ProRule" id="PRU01346"/>
    </source>
</evidence>
<keyword id="KW-1185">Reference proteome</keyword>
<keyword id="KW-0694">RNA-binding</keyword>
<keyword id="KW-0346">Stress response</keyword>
<organism>
    <name type="scientific">Bradyrhizobium diazoefficiens (strain JCM 10833 / BCRC 13528 / IAM 13628 / NBRC 14792 / USDA 110)</name>
    <dbReference type="NCBI Taxonomy" id="224911"/>
    <lineage>
        <taxon>Bacteria</taxon>
        <taxon>Pseudomonadati</taxon>
        <taxon>Pseudomonadota</taxon>
        <taxon>Alphaproteobacteria</taxon>
        <taxon>Hyphomicrobiales</taxon>
        <taxon>Nitrobacteraceae</taxon>
        <taxon>Bradyrhizobium</taxon>
    </lineage>
</organism>
<reference key="1">
    <citation type="journal article" date="2002" name="DNA Res.">
        <title>Complete genomic sequence of nitrogen-fixing symbiotic bacterium Bradyrhizobium japonicum USDA110.</title>
        <authorList>
            <person name="Kaneko T."/>
            <person name="Nakamura Y."/>
            <person name="Sato S."/>
            <person name="Minamisawa K."/>
            <person name="Uchiumi T."/>
            <person name="Sasamoto S."/>
            <person name="Watanabe A."/>
            <person name="Idesawa K."/>
            <person name="Iriguchi M."/>
            <person name="Kawashima K."/>
            <person name="Kohara M."/>
            <person name="Matsumoto M."/>
            <person name="Shimpo S."/>
            <person name="Tsuruoka H."/>
            <person name="Wada T."/>
            <person name="Yamada M."/>
            <person name="Tabata S."/>
        </authorList>
    </citation>
    <scope>NUCLEOTIDE SEQUENCE [LARGE SCALE GENOMIC DNA]</scope>
    <source>
        <strain>JCM 10833 / BCRC 13528 / IAM 13628 / NBRC 14792 / USDA 110</strain>
    </source>
</reference>
<name>HFQ_BRADU</name>